<dbReference type="EC" id="1.1.1.27" evidence="1"/>
<dbReference type="EMBL" id="CP000239">
    <property type="protein sequence ID" value="ABD00782.1"/>
    <property type="molecule type" value="Genomic_DNA"/>
</dbReference>
<dbReference type="RefSeq" id="WP_011431453.1">
    <property type="nucleotide sequence ID" value="NC_007775.1"/>
</dbReference>
<dbReference type="SMR" id="Q2JRH2"/>
<dbReference type="STRING" id="321327.CYA_2670"/>
<dbReference type="KEGG" id="cya:CYA_2670"/>
<dbReference type="eggNOG" id="COG0039">
    <property type="taxonomic scope" value="Bacteria"/>
</dbReference>
<dbReference type="HOGENOM" id="CLU_045401_1_1_3"/>
<dbReference type="OrthoDB" id="9802969at2"/>
<dbReference type="UniPathway" id="UPA00554">
    <property type="reaction ID" value="UER00611"/>
</dbReference>
<dbReference type="Proteomes" id="UP000008818">
    <property type="component" value="Chromosome"/>
</dbReference>
<dbReference type="GO" id="GO:0005737">
    <property type="term" value="C:cytoplasm"/>
    <property type="evidence" value="ECO:0007669"/>
    <property type="project" value="UniProtKB-SubCell"/>
</dbReference>
<dbReference type="GO" id="GO:0004459">
    <property type="term" value="F:L-lactate dehydrogenase activity"/>
    <property type="evidence" value="ECO:0007669"/>
    <property type="project" value="UniProtKB-UniRule"/>
</dbReference>
<dbReference type="GO" id="GO:0006096">
    <property type="term" value="P:glycolytic process"/>
    <property type="evidence" value="ECO:0007669"/>
    <property type="project" value="UniProtKB-UniRule"/>
</dbReference>
<dbReference type="GO" id="GO:0006089">
    <property type="term" value="P:lactate metabolic process"/>
    <property type="evidence" value="ECO:0007669"/>
    <property type="project" value="TreeGrafter"/>
</dbReference>
<dbReference type="CDD" id="cd05292">
    <property type="entry name" value="LDH_2"/>
    <property type="match status" value="1"/>
</dbReference>
<dbReference type="FunFam" id="3.40.50.720:FF:000018">
    <property type="entry name" value="Malate dehydrogenase"/>
    <property type="match status" value="1"/>
</dbReference>
<dbReference type="Gene3D" id="3.90.110.10">
    <property type="entry name" value="Lactate dehydrogenase/glycoside hydrolase, family 4, C-terminal"/>
    <property type="match status" value="1"/>
</dbReference>
<dbReference type="Gene3D" id="3.40.50.720">
    <property type="entry name" value="NAD(P)-binding Rossmann-like Domain"/>
    <property type="match status" value="1"/>
</dbReference>
<dbReference type="HAMAP" id="MF_00488">
    <property type="entry name" value="Lactate_dehydrog"/>
    <property type="match status" value="1"/>
</dbReference>
<dbReference type="InterPro" id="IPR001557">
    <property type="entry name" value="L-lactate/malate_DH"/>
</dbReference>
<dbReference type="InterPro" id="IPR011304">
    <property type="entry name" value="L-lactate_DH"/>
</dbReference>
<dbReference type="InterPro" id="IPR018177">
    <property type="entry name" value="L-lactate_DH_AS"/>
</dbReference>
<dbReference type="InterPro" id="IPR022383">
    <property type="entry name" value="Lactate/malate_DH_C"/>
</dbReference>
<dbReference type="InterPro" id="IPR001236">
    <property type="entry name" value="Lactate/malate_DH_N"/>
</dbReference>
<dbReference type="InterPro" id="IPR015955">
    <property type="entry name" value="Lactate_DH/Glyco_Ohase_4_C"/>
</dbReference>
<dbReference type="InterPro" id="IPR036291">
    <property type="entry name" value="NAD(P)-bd_dom_sf"/>
</dbReference>
<dbReference type="NCBIfam" id="TIGR01771">
    <property type="entry name" value="L-LDH-NAD"/>
    <property type="match status" value="1"/>
</dbReference>
<dbReference type="NCBIfam" id="NF000824">
    <property type="entry name" value="PRK00066.1"/>
    <property type="match status" value="1"/>
</dbReference>
<dbReference type="PANTHER" id="PTHR43128">
    <property type="entry name" value="L-2-HYDROXYCARBOXYLATE DEHYDROGENASE (NAD(P)(+))"/>
    <property type="match status" value="1"/>
</dbReference>
<dbReference type="PANTHER" id="PTHR43128:SF16">
    <property type="entry name" value="L-LACTATE DEHYDROGENASE"/>
    <property type="match status" value="1"/>
</dbReference>
<dbReference type="Pfam" id="PF02866">
    <property type="entry name" value="Ldh_1_C"/>
    <property type="match status" value="1"/>
</dbReference>
<dbReference type="Pfam" id="PF00056">
    <property type="entry name" value="Ldh_1_N"/>
    <property type="match status" value="1"/>
</dbReference>
<dbReference type="PIRSF" id="PIRSF000102">
    <property type="entry name" value="Lac_mal_DH"/>
    <property type="match status" value="1"/>
</dbReference>
<dbReference type="PRINTS" id="PR00086">
    <property type="entry name" value="LLDHDRGNASE"/>
</dbReference>
<dbReference type="SUPFAM" id="SSF56327">
    <property type="entry name" value="LDH C-terminal domain-like"/>
    <property type="match status" value="1"/>
</dbReference>
<dbReference type="SUPFAM" id="SSF51735">
    <property type="entry name" value="NAD(P)-binding Rossmann-fold domains"/>
    <property type="match status" value="1"/>
</dbReference>
<dbReference type="PROSITE" id="PS00064">
    <property type="entry name" value="L_LDH"/>
    <property type="match status" value="1"/>
</dbReference>
<accession>Q2JRH2</accession>
<sequence>MKGSIIGAGQVGMACAYAMLIQNTLDELVIHDIDRAKLEGEVMDLVHGIPFVEPTRIWAGELADCAGSDVVIVTAGAKQRPGETRLDLVHRNVEIFKSLIPALMEHCPSAIFLVVSNPVDVMTYVSLKLAGLPAGQVLGSGTVLDTARFRYLLAQRLGVDPRSLHAYIIGEHGDSEVAVWSKVNIAGTPIGQLSPEWDPAHLGDIFEQVRNAAYEIIRRKGATSYAIGLGVAQIVQALVRDQRRVLTVSSLTQGEYDLPEVCLSLPRVVGRQGVERTLAMSLTESERQQLHRSAHILRQVIDSIRW</sequence>
<protein>
    <recommendedName>
        <fullName evidence="1">L-lactate dehydrogenase</fullName>
        <shortName evidence="1">L-LDH</shortName>
        <ecNumber evidence="1">1.1.1.27</ecNumber>
    </recommendedName>
</protein>
<reference key="1">
    <citation type="journal article" date="2007" name="ISME J.">
        <title>Population level functional diversity in a microbial community revealed by comparative genomic and metagenomic analyses.</title>
        <authorList>
            <person name="Bhaya D."/>
            <person name="Grossman A.R."/>
            <person name="Steunou A.-S."/>
            <person name="Khuri N."/>
            <person name="Cohan F.M."/>
            <person name="Hamamura N."/>
            <person name="Melendrez M.C."/>
            <person name="Bateson M.M."/>
            <person name="Ward D.M."/>
            <person name="Heidelberg J.F."/>
        </authorList>
    </citation>
    <scope>NUCLEOTIDE SEQUENCE [LARGE SCALE GENOMIC DNA]</scope>
    <source>
        <strain>JA-3-3Ab</strain>
    </source>
</reference>
<feature type="chain" id="PRO_0000237568" description="L-lactate dehydrogenase">
    <location>
        <begin position="1"/>
        <end position="306"/>
    </location>
</feature>
<feature type="active site" description="Proton acceptor" evidence="1">
    <location>
        <position position="172"/>
    </location>
</feature>
<feature type="binding site" evidence="1">
    <location>
        <position position="11"/>
    </location>
    <ligand>
        <name>NAD(+)</name>
        <dbReference type="ChEBI" id="CHEBI:57540"/>
    </ligand>
</feature>
<feature type="binding site" evidence="1">
    <location>
        <position position="32"/>
    </location>
    <ligand>
        <name>NAD(+)</name>
        <dbReference type="ChEBI" id="CHEBI:57540"/>
    </ligand>
</feature>
<feature type="binding site" evidence="1">
    <location>
        <position position="37"/>
    </location>
    <ligand>
        <name>NAD(+)</name>
        <dbReference type="ChEBI" id="CHEBI:57540"/>
    </ligand>
</feature>
<feature type="binding site" evidence="1">
    <location>
        <begin position="76"/>
        <end position="77"/>
    </location>
    <ligand>
        <name>NAD(+)</name>
        <dbReference type="ChEBI" id="CHEBI:57540"/>
    </ligand>
</feature>
<feature type="binding site" evidence="1">
    <location>
        <position position="79"/>
    </location>
    <ligand>
        <name>substrate</name>
    </ligand>
</feature>
<feature type="binding site" evidence="1">
    <location>
        <position position="85"/>
    </location>
    <ligand>
        <name>substrate</name>
    </ligand>
</feature>
<feature type="binding site" evidence="1">
    <location>
        <position position="98"/>
    </location>
    <ligand>
        <name>NAD(+)</name>
        <dbReference type="ChEBI" id="CHEBI:57540"/>
    </ligand>
</feature>
<feature type="binding site" evidence="1">
    <location>
        <begin position="115"/>
        <end position="117"/>
    </location>
    <ligand>
        <name>NAD(+)</name>
        <dbReference type="ChEBI" id="CHEBI:57540"/>
    </ligand>
</feature>
<feature type="binding site" evidence="1">
    <location>
        <begin position="117"/>
        <end position="120"/>
    </location>
    <ligand>
        <name>substrate</name>
    </ligand>
</feature>
<feature type="binding site" evidence="1">
    <location>
        <position position="140"/>
    </location>
    <ligand>
        <name>NAD(+)</name>
        <dbReference type="ChEBI" id="CHEBI:57540"/>
    </ligand>
</feature>
<feature type="binding site" evidence="1">
    <location>
        <begin position="145"/>
        <end position="148"/>
    </location>
    <ligand>
        <name>substrate</name>
    </ligand>
</feature>
<feature type="binding site" evidence="1">
    <location>
        <position position="150"/>
    </location>
    <ligand>
        <name>beta-D-fructose 1,6-bisphosphate</name>
        <dbReference type="ChEBI" id="CHEBI:32966"/>
        <note>allosteric activator</note>
    </ligand>
</feature>
<feature type="binding site" evidence="1">
    <location>
        <position position="165"/>
    </location>
    <ligand>
        <name>beta-D-fructose 1,6-bisphosphate</name>
        <dbReference type="ChEBI" id="CHEBI:32966"/>
        <note>allosteric activator</note>
    </ligand>
</feature>
<feature type="binding site" evidence="1">
    <location>
        <position position="223"/>
    </location>
    <ligand>
        <name>substrate</name>
    </ligand>
</feature>
<feature type="modified residue" description="Phosphotyrosine" evidence="1">
    <location>
        <position position="214"/>
    </location>
</feature>
<comment type="function">
    <text evidence="1">Catalyzes the conversion of lactate to pyruvate.</text>
</comment>
<comment type="catalytic activity">
    <reaction evidence="1">
        <text>(S)-lactate + NAD(+) = pyruvate + NADH + H(+)</text>
        <dbReference type="Rhea" id="RHEA:23444"/>
        <dbReference type="ChEBI" id="CHEBI:15361"/>
        <dbReference type="ChEBI" id="CHEBI:15378"/>
        <dbReference type="ChEBI" id="CHEBI:16651"/>
        <dbReference type="ChEBI" id="CHEBI:57540"/>
        <dbReference type="ChEBI" id="CHEBI:57945"/>
        <dbReference type="EC" id="1.1.1.27"/>
    </reaction>
</comment>
<comment type="activity regulation">
    <text evidence="1">Allosterically activated by fructose 1,6-bisphosphate (FBP).</text>
</comment>
<comment type="pathway">
    <text evidence="1">Fermentation; pyruvate fermentation to lactate; (S)-lactate from pyruvate: step 1/1.</text>
</comment>
<comment type="subunit">
    <text evidence="1">Homotetramer.</text>
</comment>
<comment type="subcellular location">
    <subcellularLocation>
        <location evidence="1">Cytoplasm</location>
    </subcellularLocation>
</comment>
<comment type="similarity">
    <text evidence="1">Belongs to the LDH/MDH superfamily. LDH family.</text>
</comment>
<gene>
    <name evidence="1" type="primary">ldh</name>
    <name type="ordered locus">CYA_2670</name>
</gene>
<name>LDH_SYNJA</name>
<keyword id="KW-0021">Allosteric enzyme</keyword>
<keyword id="KW-0963">Cytoplasm</keyword>
<keyword id="KW-0520">NAD</keyword>
<keyword id="KW-0560">Oxidoreductase</keyword>
<keyword id="KW-0597">Phosphoprotein</keyword>
<organism>
    <name type="scientific">Synechococcus sp. (strain JA-3-3Ab)</name>
    <name type="common">Cyanobacteria bacterium Yellowstone A-Prime</name>
    <dbReference type="NCBI Taxonomy" id="321327"/>
    <lineage>
        <taxon>Bacteria</taxon>
        <taxon>Bacillati</taxon>
        <taxon>Cyanobacteriota</taxon>
        <taxon>Cyanophyceae</taxon>
        <taxon>Synechococcales</taxon>
        <taxon>Synechococcaceae</taxon>
        <taxon>Synechococcus</taxon>
    </lineage>
</organism>
<proteinExistence type="inferred from homology"/>
<evidence type="ECO:0000255" key="1">
    <source>
        <dbReference type="HAMAP-Rule" id="MF_00488"/>
    </source>
</evidence>